<proteinExistence type="inferred from homology"/>
<protein>
    <recommendedName>
        <fullName>Apoptosis inhibitor U19</fullName>
    </recommendedName>
</protein>
<organism>
    <name type="scientific">Human herpesvirus 6A (strain Uganda-1102)</name>
    <name type="common">HHV-6 variant A</name>
    <name type="synonym">Human B lymphotropic virus</name>
    <dbReference type="NCBI Taxonomy" id="10370"/>
    <lineage>
        <taxon>Viruses</taxon>
        <taxon>Duplodnaviria</taxon>
        <taxon>Heunggongvirae</taxon>
        <taxon>Peploviricota</taxon>
        <taxon>Herviviricetes</taxon>
        <taxon>Herpesvirales</taxon>
        <taxon>Orthoherpesviridae</taxon>
        <taxon>Betaherpesvirinae</taxon>
        <taxon>Roseolovirus</taxon>
        <taxon>Roseolovirus humanbeta6a</taxon>
        <taxon>Human betaherpesvirus 6A</taxon>
    </lineage>
</organism>
<evidence type="ECO:0000250" key="1">
    <source>
        <dbReference type="UniProtKB" id="F5HG98"/>
    </source>
</evidence>
<evidence type="ECO:0000250" key="2">
    <source>
        <dbReference type="UniProtKB" id="Q9WT45"/>
    </source>
</evidence>
<evidence type="ECO:0000305" key="3"/>
<organismHost>
    <name type="scientific">Homo sapiens</name>
    <name type="common">Human</name>
    <dbReference type="NCBI Taxonomy" id="9606"/>
</organismHost>
<comment type="function">
    <text evidence="2">Plays a role in the inhibition of host apoptosis to facilitate efficient viral replication. Promotes stabilization and inactivation of host TP53 through interaction with host MDM2.</text>
</comment>
<comment type="subunit">
    <text evidence="2">Interacts with host MDM2; this interaction leads to the stabilization of host TP53.</text>
</comment>
<comment type="subcellular location">
    <subcellularLocation>
        <location evidence="1">Host cytoplasm</location>
    </subcellularLocation>
    <subcellularLocation>
        <location evidence="1">Host nucleus</location>
    </subcellularLocation>
    <text evidence="1">localized in the host nucleus at early times postinfection and then increases in both nuclear and cytoplasmic compartments during the course of infection.</text>
</comment>
<comment type="similarity">
    <text>Belongs to the beta-herpesvirinae UL38 protein family.</text>
</comment>
<comment type="sequence caution" evidence="3">
    <conflict type="erroneous initiation">
        <sequence resource="EMBL-CDS" id="AAA16726"/>
    </conflict>
    <text>Extended N-terminus.</text>
</comment>
<feature type="chain" id="PRO_0000342574" description="Apoptosis inhibitor U19">
    <location>
        <begin position="1"/>
        <end position="389"/>
    </location>
</feature>
<reference key="1">
    <citation type="journal article" date="1994" name="J. Virol.">
        <title>Nucleotide sequence analysis of a 38.5-kilobase-pair region of the genome of human herpesvirus 6 encoding human cytomegalovirus immediate-early gene homologs and transactivating functions.</title>
        <authorList>
            <person name="Nicholas J."/>
            <person name="Martin M.E.D."/>
        </authorList>
    </citation>
    <scope>NUCLEOTIDE SEQUENCE [GENOMIC DNA]</scope>
</reference>
<reference key="2">
    <citation type="journal article" date="1995" name="Virology">
        <title>The DNA sequence of human herpesvirus-6: structure, coding content, and genome evolution.</title>
        <authorList>
            <person name="Gompels U.A."/>
            <person name="Nicholas J."/>
            <person name="Lawrence G.L."/>
            <person name="Jones M."/>
            <person name="Thomson B.J."/>
            <person name="Martin M.E.D."/>
            <person name="Efstathiou S."/>
            <person name="Craxton M.A."/>
            <person name="Macaulay H.A."/>
        </authorList>
    </citation>
    <scope>NUCLEOTIDE SEQUENCE [LARGE SCALE GENOMIC DNA]</scope>
</reference>
<accession>Q69554</accession>
<accession>Q69043</accession>
<sequence>MAFTGDELARMLQFKDKMISSAGLALKFEKVVQEAMASGIVLQHITCIKVRICDNSDILSDRQLRSLLINGLYPFEGRMSMFGVTEEWEGASAAPERQVVFLLSSTGQVLGYEDGVVFYLSPTFSDFWTTAMEFSCQNAILSNFIAQKSRDEYIDQFQKYFTRMRHTPIFLTGVLPRRFQKVESSACVEEDARASMRPIQCDSFGVKDTFCRPTEELLQPSANKDVGGKVCMSLSCREDNSARHCTIYGLTETRGIKIMFSRHTQTDRSEVMCNAATQTGDVVDNSSETLFLGKNLVHQSILETEVKTTAKNTFDVSNPRIDSVYDTTVFGAMATDDVGCENVQGGASLAQEKPLKGYCITATPSECKPNIHWLKSPEKTVQESAAVLR</sequence>
<name>UL38_HHV6U</name>
<gene>
    <name type="primary">U19</name>
    <name type="synonym">EJLF4</name>
</gene>
<keyword id="KW-1035">Host cytoplasm</keyword>
<keyword id="KW-1048">Host nucleus</keyword>
<keyword id="KW-0945">Host-virus interaction</keyword>
<keyword id="KW-1119">Modulation of host cell apoptosis by virus</keyword>
<keyword id="KW-1185">Reference proteome</keyword>
<dbReference type="EMBL" id="L25528">
    <property type="protein sequence ID" value="AAA16726.1"/>
    <property type="status" value="ALT_INIT"/>
    <property type="molecule type" value="Genomic_DNA"/>
</dbReference>
<dbReference type="EMBL" id="X83413">
    <property type="protein sequence ID" value="CAA58399.1"/>
    <property type="molecule type" value="Genomic_DNA"/>
</dbReference>
<dbReference type="PIR" id="T09313">
    <property type="entry name" value="T09313"/>
</dbReference>
<dbReference type="RefSeq" id="NP_042912.1">
    <property type="nucleotide sequence ID" value="NC_001664.2"/>
</dbReference>
<dbReference type="DNASU" id="1487945"/>
<dbReference type="GeneID" id="1487945"/>
<dbReference type="KEGG" id="vg:1487945"/>
<dbReference type="Proteomes" id="UP000009295">
    <property type="component" value="Segment"/>
</dbReference>
<dbReference type="GO" id="GO:0030430">
    <property type="term" value="C:host cell cytoplasm"/>
    <property type="evidence" value="ECO:0007669"/>
    <property type="project" value="UniProtKB-SubCell"/>
</dbReference>
<dbReference type="GO" id="GO:0042025">
    <property type="term" value="C:host cell nucleus"/>
    <property type="evidence" value="ECO:0007669"/>
    <property type="project" value="UniProtKB-SubCell"/>
</dbReference>
<dbReference type="GO" id="GO:0052150">
    <property type="term" value="P:symbiont-mediated perturbation of host apoptosis"/>
    <property type="evidence" value="ECO:0007669"/>
    <property type="project" value="UniProtKB-KW"/>
</dbReference>